<proteinExistence type="evidence at transcript level"/>
<organism>
    <name type="scientific">Drosophila melanogaster</name>
    <name type="common">Fruit fly</name>
    <dbReference type="NCBI Taxonomy" id="7227"/>
    <lineage>
        <taxon>Eukaryota</taxon>
        <taxon>Metazoa</taxon>
        <taxon>Ecdysozoa</taxon>
        <taxon>Arthropoda</taxon>
        <taxon>Hexapoda</taxon>
        <taxon>Insecta</taxon>
        <taxon>Pterygota</taxon>
        <taxon>Neoptera</taxon>
        <taxon>Endopterygota</taxon>
        <taxon>Diptera</taxon>
        <taxon>Brachycera</taxon>
        <taxon>Muscomorpha</taxon>
        <taxon>Ephydroidea</taxon>
        <taxon>Drosophilidae</taxon>
        <taxon>Drosophila</taxon>
        <taxon>Sophophora</taxon>
    </lineage>
</organism>
<sequence length="497" mass="53784">MTKMIPPVPTAAAAVMMPTPKQKIGFSIESIVGNDVSTAGGNSTPDLSGPQSPPPGERNVPGSPPQTPPATLTLIPGSPPHHLMAPPAHGLPYPHPHAQQQQQQHLQAPHPHPHLSPAQQHVLHQHLLMQHQHPGTPKSHQDIQELLQRLHHNAAMASGLSPLQTRLSPETEQPQMAVSLKRERSPAPPAMEQAENPAQRIQPPHTPPKSVSPQSSQPSSSPTLLISSPHATPPQQQQQQPPPNYPKPAMMHPGGAGPMMMPGMPPAGLVRPFPMGPGGPPMPQGQPGLPDIKALPPYINAPPELPPQHNPHLIAAAQFQMAAALQAGHVLGPAAAAAAAAGLPPHAAQFMPNPGMARDSYQLYPWLLSRHGRIFPHRFPGSFLVPPFRKPKRIRTAFSPSQLLKLEHAFESNQYVVGAERKALAQNLNLSETQVKVWFQNRRTKHKRMQQEDEKGGEGGSQRNMHNGSGDEDDDELIDMEMDECPSDEEHELDASH</sequence>
<accession>P18488</accession>
<accession>Q9VFQ1</accession>
<protein>
    <recommendedName>
        <fullName>Homeotic protein empty spiracles</fullName>
    </recommendedName>
</protein>
<reference key="1">
    <citation type="journal article" date="1989" name="Genes Dev.">
        <title>Expression and embryonic function of empty spiracles: a Drosophila homeo box gene with two patterning functions on the anterior-posterior axis of the embryo.</title>
        <authorList>
            <person name="Dalton D."/>
            <person name="Chadwick R."/>
            <person name="McGinnis W."/>
        </authorList>
    </citation>
    <scope>NUCLEOTIDE SEQUENCE [MRNA]</scope>
    <source>
        <strain>Oregon-R</strain>
    </source>
</reference>
<reference key="2">
    <citation type="journal article" date="1992" name="EMBO J.">
        <title>Empty spiracles, a gap gene containing a homeobox involved in Drosophila head development.</title>
        <authorList>
            <person name="Walldorf U."/>
            <person name="Gehring W.J."/>
        </authorList>
    </citation>
    <scope>NUCLEOTIDE SEQUENCE [GENOMIC DNA]</scope>
    <source>
        <strain>Canton-S</strain>
    </source>
</reference>
<reference key="3">
    <citation type="journal article" date="2000" name="Science">
        <title>The genome sequence of Drosophila melanogaster.</title>
        <authorList>
            <person name="Adams M.D."/>
            <person name="Celniker S.E."/>
            <person name="Holt R.A."/>
            <person name="Evans C.A."/>
            <person name="Gocayne J.D."/>
            <person name="Amanatides P.G."/>
            <person name="Scherer S.E."/>
            <person name="Li P.W."/>
            <person name="Hoskins R.A."/>
            <person name="Galle R.F."/>
            <person name="George R.A."/>
            <person name="Lewis S.E."/>
            <person name="Richards S."/>
            <person name="Ashburner M."/>
            <person name="Henderson S.N."/>
            <person name="Sutton G.G."/>
            <person name="Wortman J.R."/>
            <person name="Yandell M.D."/>
            <person name="Zhang Q."/>
            <person name="Chen L.X."/>
            <person name="Brandon R.C."/>
            <person name="Rogers Y.-H.C."/>
            <person name="Blazej R.G."/>
            <person name="Champe M."/>
            <person name="Pfeiffer B.D."/>
            <person name="Wan K.H."/>
            <person name="Doyle C."/>
            <person name="Baxter E.G."/>
            <person name="Helt G."/>
            <person name="Nelson C.R."/>
            <person name="Miklos G.L.G."/>
            <person name="Abril J.F."/>
            <person name="Agbayani A."/>
            <person name="An H.-J."/>
            <person name="Andrews-Pfannkoch C."/>
            <person name="Baldwin D."/>
            <person name="Ballew R.M."/>
            <person name="Basu A."/>
            <person name="Baxendale J."/>
            <person name="Bayraktaroglu L."/>
            <person name="Beasley E.M."/>
            <person name="Beeson K.Y."/>
            <person name="Benos P.V."/>
            <person name="Berman B.P."/>
            <person name="Bhandari D."/>
            <person name="Bolshakov S."/>
            <person name="Borkova D."/>
            <person name="Botchan M.R."/>
            <person name="Bouck J."/>
            <person name="Brokstein P."/>
            <person name="Brottier P."/>
            <person name="Burtis K.C."/>
            <person name="Busam D.A."/>
            <person name="Butler H."/>
            <person name="Cadieu E."/>
            <person name="Center A."/>
            <person name="Chandra I."/>
            <person name="Cherry J.M."/>
            <person name="Cawley S."/>
            <person name="Dahlke C."/>
            <person name="Davenport L.B."/>
            <person name="Davies P."/>
            <person name="de Pablos B."/>
            <person name="Delcher A."/>
            <person name="Deng Z."/>
            <person name="Mays A.D."/>
            <person name="Dew I."/>
            <person name="Dietz S.M."/>
            <person name="Dodson K."/>
            <person name="Doup L.E."/>
            <person name="Downes M."/>
            <person name="Dugan-Rocha S."/>
            <person name="Dunkov B.C."/>
            <person name="Dunn P."/>
            <person name="Durbin K.J."/>
            <person name="Evangelista C.C."/>
            <person name="Ferraz C."/>
            <person name="Ferriera S."/>
            <person name="Fleischmann W."/>
            <person name="Fosler C."/>
            <person name="Gabrielian A.E."/>
            <person name="Garg N.S."/>
            <person name="Gelbart W.M."/>
            <person name="Glasser K."/>
            <person name="Glodek A."/>
            <person name="Gong F."/>
            <person name="Gorrell J.H."/>
            <person name="Gu Z."/>
            <person name="Guan P."/>
            <person name="Harris M."/>
            <person name="Harris N.L."/>
            <person name="Harvey D.A."/>
            <person name="Heiman T.J."/>
            <person name="Hernandez J.R."/>
            <person name="Houck J."/>
            <person name="Hostin D."/>
            <person name="Houston K.A."/>
            <person name="Howland T.J."/>
            <person name="Wei M.-H."/>
            <person name="Ibegwam C."/>
            <person name="Jalali M."/>
            <person name="Kalush F."/>
            <person name="Karpen G.H."/>
            <person name="Ke Z."/>
            <person name="Kennison J.A."/>
            <person name="Ketchum K.A."/>
            <person name="Kimmel B.E."/>
            <person name="Kodira C.D."/>
            <person name="Kraft C.L."/>
            <person name="Kravitz S."/>
            <person name="Kulp D."/>
            <person name="Lai Z."/>
            <person name="Lasko P."/>
            <person name="Lei Y."/>
            <person name="Levitsky A.A."/>
            <person name="Li J.H."/>
            <person name="Li Z."/>
            <person name="Liang Y."/>
            <person name="Lin X."/>
            <person name="Liu X."/>
            <person name="Mattei B."/>
            <person name="McIntosh T.C."/>
            <person name="McLeod M.P."/>
            <person name="McPherson D."/>
            <person name="Merkulov G."/>
            <person name="Milshina N.V."/>
            <person name="Mobarry C."/>
            <person name="Morris J."/>
            <person name="Moshrefi A."/>
            <person name="Mount S.M."/>
            <person name="Moy M."/>
            <person name="Murphy B."/>
            <person name="Murphy L."/>
            <person name="Muzny D.M."/>
            <person name="Nelson D.L."/>
            <person name="Nelson D.R."/>
            <person name="Nelson K.A."/>
            <person name="Nixon K."/>
            <person name="Nusskern D.R."/>
            <person name="Pacleb J.M."/>
            <person name="Palazzolo M."/>
            <person name="Pittman G.S."/>
            <person name="Pan S."/>
            <person name="Pollard J."/>
            <person name="Puri V."/>
            <person name="Reese M.G."/>
            <person name="Reinert K."/>
            <person name="Remington K."/>
            <person name="Saunders R.D.C."/>
            <person name="Scheeler F."/>
            <person name="Shen H."/>
            <person name="Shue B.C."/>
            <person name="Siden-Kiamos I."/>
            <person name="Simpson M."/>
            <person name="Skupski M.P."/>
            <person name="Smith T.J."/>
            <person name="Spier E."/>
            <person name="Spradling A.C."/>
            <person name="Stapleton M."/>
            <person name="Strong R."/>
            <person name="Sun E."/>
            <person name="Svirskas R."/>
            <person name="Tector C."/>
            <person name="Turner R."/>
            <person name="Venter E."/>
            <person name="Wang A.H."/>
            <person name="Wang X."/>
            <person name="Wang Z.-Y."/>
            <person name="Wassarman D.A."/>
            <person name="Weinstock G.M."/>
            <person name="Weissenbach J."/>
            <person name="Williams S.M."/>
            <person name="Woodage T."/>
            <person name="Worley K.C."/>
            <person name="Wu D."/>
            <person name="Yang S."/>
            <person name="Yao Q.A."/>
            <person name="Ye J."/>
            <person name="Yeh R.-F."/>
            <person name="Zaveri J.S."/>
            <person name="Zhan M."/>
            <person name="Zhang G."/>
            <person name="Zhao Q."/>
            <person name="Zheng L."/>
            <person name="Zheng X.H."/>
            <person name="Zhong F.N."/>
            <person name="Zhong W."/>
            <person name="Zhou X."/>
            <person name="Zhu S.C."/>
            <person name="Zhu X."/>
            <person name="Smith H.O."/>
            <person name="Gibbs R.A."/>
            <person name="Myers E.W."/>
            <person name="Rubin G.M."/>
            <person name="Venter J.C."/>
        </authorList>
    </citation>
    <scope>NUCLEOTIDE SEQUENCE [LARGE SCALE GENOMIC DNA]</scope>
    <source>
        <strain>Berkeley</strain>
    </source>
</reference>
<reference key="4">
    <citation type="journal article" date="2002" name="Genome Biol.">
        <title>Annotation of the Drosophila melanogaster euchromatic genome: a systematic review.</title>
        <authorList>
            <person name="Misra S."/>
            <person name="Crosby M.A."/>
            <person name="Mungall C.J."/>
            <person name="Matthews B.B."/>
            <person name="Campbell K.S."/>
            <person name="Hradecky P."/>
            <person name="Huang Y."/>
            <person name="Kaminker J.S."/>
            <person name="Millburn G.H."/>
            <person name="Prochnik S.E."/>
            <person name="Smith C.D."/>
            <person name="Tupy J.L."/>
            <person name="Whitfield E.J."/>
            <person name="Bayraktaroglu L."/>
            <person name="Berman B.P."/>
            <person name="Bettencourt B.R."/>
            <person name="Celniker S.E."/>
            <person name="de Grey A.D.N.J."/>
            <person name="Drysdale R.A."/>
            <person name="Harris N.L."/>
            <person name="Richter J."/>
            <person name="Russo S."/>
            <person name="Schroeder A.J."/>
            <person name="Shu S.Q."/>
            <person name="Stapleton M."/>
            <person name="Yamada C."/>
            <person name="Ashburner M."/>
            <person name="Gelbart W.M."/>
            <person name="Rubin G.M."/>
            <person name="Lewis S.E."/>
        </authorList>
    </citation>
    <scope>GENOME REANNOTATION</scope>
    <source>
        <strain>Berkeley</strain>
    </source>
</reference>
<gene>
    <name type="primary">ems</name>
    <name type="synonym">E4</name>
    <name type="ORF">CG2988</name>
</gene>
<comment type="function">
    <text>Acts as a homeotic selector gene controlling antennal and mandibular segment identity.</text>
</comment>
<comment type="subcellular location">
    <subcellularLocation>
        <location>Nucleus</location>
    </subcellularLocation>
</comment>
<comment type="developmental stage">
    <text>EMS has two different spatial patterns of expression during embryogenesis. The EMS head-specific expression pattern initiates prior to cellular blastoderm and continues only until early germ-band extension. The EMS metameric expression pattern initiates after gastrulation and is expressed in the lateral neuroblasts, in ectodermal cells at the anterior lateral borders of each segment, and in the Filzkoerper primordia.</text>
</comment>
<comment type="miscellaneous">
    <text>The sequence shown is that of strain canton S.</text>
</comment>
<comment type="similarity">
    <text evidence="3">Belongs to the EMX homeobox family.</text>
</comment>
<keyword id="KW-0217">Developmental protein</keyword>
<keyword id="KW-0238">DNA-binding</keyword>
<keyword id="KW-0371">Homeobox</keyword>
<keyword id="KW-0539">Nucleus</keyword>
<keyword id="KW-1185">Reference proteome</keyword>
<feature type="chain" id="PRO_0000049059" description="Homeotic protein empty spiracles">
    <location>
        <begin position="1"/>
        <end position="497"/>
    </location>
</feature>
<feature type="DNA-binding region" description="Homeobox" evidence="1">
    <location>
        <begin position="391"/>
        <end position="450"/>
    </location>
</feature>
<feature type="region of interest" description="Disordered" evidence="2">
    <location>
        <begin position="34"/>
        <end position="117"/>
    </location>
</feature>
<feature type="region of interest" description="Disordered" evidence="2">
    <location>
        <begin position="161"/>
        <end position="262"/>
    </location>
</feature>
<feature type="region of interest" description="Disordered" evidence="2">
    <location>
        <begin position="441"/>
        <end position="497"/>
    </location>
</feature>
<feature type="compositionally biased region" description="Polar residues" evidence="2">
    <location>
        <begin position="35"/>
        <end position="50"/>
    </location>
</feature>
<feature type="compositionally biased region" description="Pro residues" evidence="2">
    <location>
        <begin position="51"/>
        <end position="68"/>
    </location>
</feature>
<feature type="compositionally biased region" description="Low complexity" evidence="2">
    <location>
        <begin position="96"/>
        <end position="117"/>
    </location>
</feature>
<feature type="compositionally biased region" description="Polar residues" evidence="2">
    <location>
        <begin position="161"/>
        <end position="176"/>
    </location>
</feature>
<feature type="compositionally biased region" description="Low complexity" evidence="2">
    <location>
        <begin position="208"/>
        <end position="239"/>
    </location>
</feature>
<feature type="compositionally biased region" description="Low complexity" evidence="2">
    <location>
        <begin position="248"/>
        <end position="262"/>
    </location>
</feature>
<feature type="compositionally biased region" description="Acidic residues" evidence="2">
    <location>
        <begin position="470"/>
        <end position="497"/>
    </location>
</feature>
<feature type="sequence variant" description="In strain: Oregon-R.">
    <original>M</original>
    <variation>T</variation>
    <location>
        <position position="4"/>
    </location>
</feature>
<feature type="sequence variant" description="In strain: Berkeley and Oregon-R.">
    <location>
        <begin position="102"/>
        <end position="104"/>
    </location>
</feature>
<feature type="sequence variant" description="In strain: Berkeley and Oregon-R.">
    <original>H</original>
    <variation>Q</variation>
    <location>
        <position position="131"/>
    </location>
</feature>
<feature type="sequence variant" description="In strain: Oregon-R.">
    <original>SG</original>
    <variation>TR</variation>
    <location>
        <begin position="158"/>
        <end position="159"/>
    </location>
</feature>
<feature type="sequence variant" description="In strain: Oregon-R.">
    <original>EL</original>
    <variation>DV</variation>
    <location>
        <begin position="304"/>
        <end position="305"/>
    </location>
</feature>
<name>EMS_DROME</name>
<dbReference type="EMBL" id="X51653">
    <property type="protein sequence ID" value="CAA35965.1"/>
    <property type="molecule type" value="mRNA"/>
</dbReference>
<dbReference type="EMBL" id="X66270">
    <property type="protein sequence ID" value="CAA46985.1"/>
    <property type="molecule type" value="Genomic_DNA"/>
</dbReference>
<dbReference type="EMBL" id="AE014297">
    <property type="protein sequence ID" value="AAF54999.1"/>
    <property type="molecule type" value="Genomic_DNA"/>
</dbReference>
<dbReference type="PIR" id="S22708">
    <property type="entry name" value="S22708"/>
</dbReference>
<dbReference type="RefSeq" id="NP_731868.1">
    <property type="nucleotide sequence ID" value="NM_169560.2"/>
</dbReference>
<dbReference type="SMR" id="P18488"/>
<dbReference type="BioGRID" id="66774">
    <property type="interactions" value="18"/>
</dbReference>
<dbReference type="FunCoup" id="P18488">
    <property type="interactions" value="1"/>
</dbReference>
<dbReference type="IntAct" id="P18488">
    <property type="interactions" value="5"/>
</dbReference>
<dbReference type="STRING" id="7227.FBpp0082326"/>
<dbReference type="GlyGen" id="P18488">
    <property type="glycosylation" value="1 site"/>
</dbReference>
<dbReference type="PaxDb" id="7227-FBpp0082326"/>
<dbReference type="DNASU" id="41697"/>
<dbReference type="GeneID" id="41697"/>
<dbReference type="KEGG" id="dme:Dmel_CG2988"/>
<dbReference type="AGR" id="FB:FBgn0000576"/>
<dbReference type="CTD" id="41697"/>
<dbReference type="FlyBase" id="FBgn0000576">
    <property type="gene designation" value="ems"/>
</dbReference>
<dbReference type="VEuPathDB" id="VectorBase:FBgn0000576"/>
<dbReference type="eggNOG" id="KOG0843">
    <property type="taxonomic scope" value="Eukaryota"/>
</dbReference>
<dbReference type="HOGENOM" id="CLU_040711_0_0_1"/>
<dbReference type="InParanoid" id="P18488"/>
<dbReference type="OrthoDB" id="6159439at2759"/>
<dbReference type="SignaLink" id="P18488"/>
<dbReference type="BioGRID-ORCS" id="41697">
    <property type="hits" value="0 hits in 3 CRISPR screens"/>
</dbReference>
<dbReference type="GenomeRNAi" id="41697"/>
<dbReference type="PRO" id="PR:P18488"/>
<dbReference type="Proteomes" id="UP000000803">
    <property type="component" value="Chromosome 3R"/>
</dbReference>
<dbReference type="ExpressionAtlas" id="P18488">
    <property type="expression patterns" value="baseline and differential"/>
</dbReference>
<dbReference type="GO" id="GO:0005634">
    <property type="term" value="C:nucleus"/>
    <property type="evidence" value="ECO:0000314"/>
    <property type="project" value="FlyBase"/>
</dbReference>
<dbReference type="GO" id="GO:0000981">
    <property type="term" value="F:DNA-binding transcription factor activity, RNA polymerase II-specific"/>
    <property type="evidence" value="ECO:0000318"/>
    <property type="project" value="GO_Central"/>
</dbReference>
<dbReference type="GO" id="GO:0000978">
    <property type="term" value="F:RNA polymerase II cis-regulatory region sequence-specific DNA binding"/>
    <property type="evidence" value="ECO:0000314"/>
    <property type="project" value="FlyBase"/>
</dbReference>
<dbReference type="GO" id="GO:0000977">
    <property type="term" value="F:RNA polymerase II transcription regulatory region sequence-specific DNA binding"/>
    <property type="evidence" value="ECO:0000314"/>
    <property type="project" value="FlyBase"/>
</dbReference>
<dbReference type="GO" id="GO:0035288">
    <property type="term" value="P:anterior head segmentation"/>
    <property type="evidence" value="ECO:0000304"/>
    <property type="project" value="FlyBase"/>
</dbReference>
<dbReference type="GO" id="GO:0007409">
    <property type="term" value="P:axonogenesis"/>
    <property type="evidence" value="ECO:0000315"/>
    <property type="project" value="FlyBase"/>
</dbReference>
<dbReference type="GO" id="GO:0007420">
    <property type="term" value="P:brain development"/>
    <property type="evidence" value="ECO:0000315"/>
    <property type="project" value="FlyBase"/>
</dbReference>
<dbReference type="GO" id="GO:0035284">
    <property type="term" value="P:brain segmentation"/>
    <property type="evidence" value="ECO:0000315"/>
    <property type="project" value="FlyBase"/>
</dbReference>
<dbReference type="GO" id="GO:0030154">
    <property type="term" value="P:cell differentiation"/>
    <property type="evidence" value="ECO:0000318"/>
    <property type="project" value="GO_Central"/>
</dbReference>
<dbReference type="GO" id="GO:0048813">
    <property type="term" value="P:dendrite morphogenesis"/>
    <property type="evidence" value="ECO:0000315"/>
    <property type="project" value="FlyBase"/>
</dbReference>
<dbReference type="GO" id="GO:0001700">
    <property type="term" value="P:embryonic development via the syncytial blastoderm"/>
    <property type="evidence" value="ECO:0000315"/>
    <property type="project" value="FlyBase"/>
</dbReference>
<dbReference type="GO" id="GO:0014019">
    <property type="term" value="P:neuroblast development"/>
    <property type="evidence" value="ECO:0000315"/>
    <property type="project" value="FlyBase"/>
</dbReference>
<dbReference type="GO" id="GO:0007424">
    <property type="term" value="P:open tracheal system development"/>
    <property type="evidence" value="ECO:0000315"/>
    <property type="project" value="FlyBase"/>
</dbReference>
<dbReference type="GO" id="GO:0007389">
    <property type="term" value="P:pattern specification process"/>
    <property type="evidence" value="ECO:0000303"/>
    <property type="project" value="FlyBase"/>
</dbReference>
<dbReference type="GO" id="GO:0010468">
    <property type="term" value="P:regulation of gene expression"/>
    <property type="evidence" value="ECO:0000315"/>
    <property type="project" value="FlyBase"/>
</dbReference>
<dbReference type="GO" id="GO:0006357">
    <property type="term" value="P:regulation of transcription by RNA polymerase II"/>
    <property type="evidence" value="ECO:0000318"/>
    <property type="project" value="GO_Central"/>
</dbReference>
<dbReference type="GO" id="GO:0035277">
    <property type="term" value="P:spiracle morphogenesis, open tracheal system"/>
    <property type="evidence" value="ECO:0000315"/>
    <property type="project" value="FlyBase"/>
</dbReference>
<dbReference type="GO" id="GO:0007419">
    <property type="term" value="P:ventral cord development"/>
    <property type="evidence" value="ECO:0000315"/>
    <property type="project" value="FlyBase"/>
</dbReference>
<dbReference type="CDD" id="cd00086">
    <property type="entry name" value="homeodomain"/>
    <property type="match status" value="1"/>
</dbReference>
<dbReference type="FunFam" id="1.10.10.60:FF:000081">
    <property type="entry name" value="Empty spiracles homeobox 2"/>
    <property type="match status" value="1"/>
</dbReference>
<dbReference type="Gene3D" id="1.10.10.60">
    <property type="entry name" value="Homeodomain-like"/>
    <property type="match status" value="1"/>
</dbReference>
<dbReference type="InterPro" id="IPR050877">
    <property type="entry name" value="EMX-VAX-Noto_Homeobox_TFs"/>
</dbReference>
<dbReference type="InterPro" id="IPR001356">
    <property type="entry name" value="HD"/>
</dbReference>
<dbReference type="InterPro" id="IPR017970">
    <property type="entry name" value="Homeobox_CS"/>
</dbReference>
<dbReference type="InterPro" id="IPR009057">
    <property type="entry name" value="Homeodomain-like_sf"/>
</dbReference>
<dbReference type="PANTHER" id="PTHR24339:SF28">
    <property type="entry name" value="E5-RELATED"/>
    <property type="match status" value="1"/>
</dbReference>
<dbReference type="PANTHER" id="PTHR24339">
    <property type="entry name" value="HOMEOBOX PROTEIN EMX-RELATED"/>
    <property type="match status" value="1"/>
</dbReference>
<dbReference type="Pfam" id="PF00046">
    <property type="entry name" value="Homeodomain"/>
    <property type="match status" value="1"/>
</dbReference>
<dbReference type="SMART" id="SM00389">
    <property type="entry name" value="HOX"/>
    <property type="match status" value="1"/>
</dbReference>
<dbReference type="SUPFAM" id="SSF46689">
    <property type="entry name" value="Homeodomain-like"/>
    <property type="match status" value="1"/>
</dbReference>
<dbReference type="PROSITE" id="PS00027">
    <property type="entry name" value="HOMEOBOX_1"/>
    <property type="match status" value="1"/>
</dbReference>
<dbReference type="PROSITE" id="PS50071">
    <property type="entry name" value="HOMEOBOX_2"/>
    <property type="match status" value="1"/>
</dbReference>
<evidence type="ECO:0000255" key="1">
    <source>
        <dbReference type="PROSITE-ProRule" id="PRU00108"/>
    </source>
</evidence>
<evidence type="ECO:0000256" key="2">
    <source>
        <dbReference type="SAM" id="MobiDB-lite"/>
    </source>
</evidence>
<evidence type="ECO:0000305" key="3"/>